<evidence type="ECO:0000255" key="1">
    <source>
        <dbReference type="PROSITE-ProRule" id="PRU00169"/>
    </source>
</evidence>
<evidence type="ECO:0000255" key="2">
    <source>
        <dbReference type="PROSITE-ProRule" id="PRU01091"/>
    </source>
</evidence>
<evidence type="ECO:0000269" key="3">
    <source>
    </source>
</evidence>
<evidence type="ECO:0000305" key="4">
    <source>
    </source>
</evidence>
<proteinExistence type="inferred from homology"/>
<gene>
    <name type="primary">ctrA</name>
    <name type="synonym">sokA</name>
    <name type="ordered locus">CCNA_03130</name>
</gene>
<name>CTRA_CAUVN</name>
<accession>B8H358</accession>
<accession>Q45994</accession>
<sequence length="231" mass="25796">MRVLLIEDDSATAQTIELMLKSEGFNVYTTDLGEEGVDLGKIYDYDLILLDLNLPDMSGIDVLRTLRVAKINTPIMILSGSSEIDTKVKTFAGGADDYMTKPFHKDEMIARIHAVVRRSKGHAQSVIKTGDIVVNLDAKTVEVNGNRVHLTGKEYQMLELLSLRKGTTLTKEMFLNHLYGGMDEPELKIIDVFICKLRKKLAASAHGKHHIETVWGRGYVLRDPNEQVNAA</sequence>
<keyword id="KW-0238">DNA-binding</keyword>
<keyword id="KW-0597">Phosphoprotein</keyword>
<keyword id="KW-1185">Reference proteome</keyword>
<keyword id="KW-0804">Transcription</keyword>
<keyword id="KW-0805">Transcription regulation</keyword>
<keyword id="KW-0902">Two-component regulatory system</keyword>
<comment type="function">
    <text>Forms part of a two-component regulatory system CtrA/CckA that controls multiple events in the cell cycle, including cell division, stalk synthesis and cell cycle-specific transcription. Binds to a group of cell cycle-regulated promoters critical for DNA replication, DNA methylation, and class II flagellar biogenesis.</text>
</comment>
<comment type="PTM">
    <text evidence="3">Phosphorylated by CckA. Degraded by the ClpXP protease (PubMed:9755166).</text>
</comment>
<reference key="1">
    <citation type="journal article" date="1996" name="Cell">
        <title>Cell cycle control by an essential bacterial two-component signal transduction protein.</title>
        <authorList>
            <person name="Quon K.C."/>
            <person name="Marczynski G.T."/>
            <person name="Shapiro L."/>
        </authorList>
    </citation>
    <scope>NUCLEOTIDE SEQUENCE [GENOMIC DNA]</scope>
</reference>
<reference key="2">
    <citation type="journal article" date="2010" name="J. Bacteriol.">
        <title>The genetic basis of laboratory adaptation in Caulobacter crescentus.</title>
        <authorList>
            <person name="Marks M.E."/>
            <person name="Castro-Rojas C.M."/>
            <person name="Teiling C."/>
            <person name="Du L."/>
            <person name="Kapatral V."/>
            <person name="Walunas T.L."/>
            <person name="Crosson S."/>
        </authorList>
    </citation>
    <scope>NUCLEOTIDE SEQUENCE [LARGE SCALE GENOMIC DNA]</scope>
    <source>
        <strain>NA1000 / CB15N</strain>
    </source>
</reference>
<reference key="3">
    <citation type="journal article" date="1998" name="EMBO J.">
        <title>An essential protease involved in bacterial cell-cycle control.</title>
        <authorList>
            <person name="Jenal U."/>
            <person name="Fuchs T."/>
        </authorList>
    </citation>
    <scope>DEGRADATION</scope>
    <scope>MUTAGENESIS OF ASP-51</scope>
    <source>
        <strain>NA1000 / CB15N</strain>
    </source>
</reference>
<protein>
    <recommendedName>
        <fullName>Cell cycle transcriptional regulator CtrA</fullName>
    </recommendedName>
    <alternativeName>
        <fullName>Response regulator SokA</fullName>
    </alternativeName>
</protein>
<dbReference type="EMBL" id="U39559">
    <property type="protein sequence ID" value="AAA93080.1"/>
    <property type="molecule type" value="Genomic_DNA"/>
</dbReference>
<dbReference type="EMBL" id="CP001340">
    <property type="protein sequence ID" value="ACL96595.1"/>
    <property type="molecule type" value="Genomic_DNA"/>
</dbReference>
<dbReference type="RefSeq" id="WP_010920871.1">
    <property type="nucleotide sequence ID" value="NC_011916.1"/>
</dbReference>
<dbReference type="RefSeq" id="YP_002518503.1">
    <property type="nucleotide sequence ID" value="NC_011916.1"/>
</dbReference>
<dbReference type="SMR" id="B8H358"/>
<dbReference type="GeneID" id="7330968"/>
<dbReference type="KEGG" id="ccs:CCNA_03130"/>
<dbReference type="PATRIC" id="fig|565050.3.peg.3056"/>
<dbReference type="HOGENOM" id="CLU_000445_30_1_5"/>
<dbReference type="OrthoDB" id="9802426at2"/>
<dbReference type="PhylomeDB" id="B8H358"/>
<dbReference type="CD-CODE" id="907141DD">
    <property type="entry name" value="PopZ condensate"/>
</dbReference>
<dbReference type="PRO" id="PR:B8H358"/>
<dbReference type="Proteomes" id="UP000001364">
    <property type="component" value="Chromosome"/>
</dbReference>
<dbReference type="GO" id="GO:0005829">
    <property type="term" value="C:cytosol"/>
    <property type="evidence" value="ECO:0007669"/>
    <property type="project" value="TreeGrafter"/>
</dbReference>
<dbReference type="GO" id="GO:0032993">
    <property type="term" value="C:protein-DNA complex"/>
    <property type="evidence" value="ECO:0007669"/>
    <property type="project" value="TreeGrafter"/>
</dbReference>
<dbReference type="GO" id="GO:0000156">
    <property type="term" value="F:phosphorelay response regulator activity"/>
    <property type="evidence" value="ECO:0007669"/>
    <property type="project" value="TreeGrafter"/>
</dbReference>
<dbReference type="GO" id="GO:0000976">
    <property type="term" value="F:transcription cis-regulatory region binding"/>
    <property type="evidence" value="ECO:0007669"/>
    <property type="project" value="TreeGrafter"/>
</dbReference>
<dbReference type="GO" id="GO:0006355">
    <property type="term" value="P:regulation of DNA-templated transcription"/>
    <property type="evidence" value="ECO:0007669"/>
    <property type="project" value="InterPro"/>
</dbReference>
<dbReference type="CDD" id="cd17616">
    <property type="entry name" value="REC_OmpR_CtrA"/>
    <property type="match status" value="1"/>
</dbReference>
<dbReference type="CDD" id="cd00383">
    <property type="entry name" value="trans_reg_C"/>
    <property type="match status" value="1"/>
</dbReference>
<dbReference type="FunFam" id="1.10.10.10:FF:000052">
    <property type="entry name" value="Cell cycle response regulator"/>
    <property type="match status" value="1"/>
</dbReference>
<dbReference type="FunFam" id="3.40.50.2300:FF:000270">
    <property type="entry name" value="Two-component system response regulator"/>
    <property type="match status" value="1"/>
</dbReference>
<dbReference type="Gene3D" id="3.40.50.2300">
    <property type="match status" value="1"/>
</dbReference>
<dbReference type="Gene3D" id="1.10.10.10">
    <property type="entry name" value="Winged helix-like DNA-binding domain superfamily/Winged helix DNA-binding domain"/>
    <property type="match status" value="1"/>
</dbReference>
<dbReference type="InterPro" id="IPR011006">
    <property type="entry name" value="CheY-like_superfamily"/>
</dbReference>
<dbReference type="InterPro" id="IPR001867">
    <property type="entry name" value="OmpR/PhoB-type_DNA-bd"/>
</dbReference>
<dbReference type="InterPro" id="IPR001789">
    <property type="entry name" value="Sig_transdc_resp-reg_receiver"/>
</dbReference>
<dbReference type="InterPro" id="IPR039420">
    <property type="entry name" value="WalR-like"/>
</dbReference>
<dbReference type="InterPro" id="IPR036388">
    <property type="entry name" value="WH-like_DNA-bd_sf"/>
</dbReference>
<dbReference type="NCBIfam" id="NF045991">
    <property type="entry name" value="RespRegCtrARhodob"/>
    <property type="match status" value="1"/>
</dbReference>
<dbReference type="PANTHER" id="PTHR48111">
    <property type="entry name" value="REGULATOR OF RPOS"/>
    <property type="match status" value="1"/>
</dbReference>
<dbReference type="PANTHER" id="PTHR48111:SF22">
    <property type="entry name" value="REGULATOR OF RPOS"/>
    <property type="match status" value="1"/>
</dbReference>
<dbReference type="Pfam" id="PF00072">
    <property type="entry name" value="Response_reg"/>
    <property type="match status" value="1"/>
</dbReference>
<dbReference type="Pfam" id="PF00486">
    <property type="entry name" value="Trans_reg_C"/>
    <property type="match status" value="1"/>
</dbReference>
<dbReference type="SMART" id="SM00448">
    <property type="entry name" value="REC"/>
    <property type="match status" value="1"/>
</dbReference>
<dbReference type="SMART" id="SM00862">
    <property type="entry name" value="Trans_reg_C"/>
    <property type="match status" value="1"/>
</dbReference>
<dbReference type="SUPFAM" id="SSF52172">
    <property type="entry name" value="CheY-like"/>
    <property type="match status" value="1"/>
</dbReference>
<dbReference type="PROSITE" id="PS51755">
    <property type="entry name" value="OMPR_PHOB"/>
    <property type="match status" value="1"/>
</dbReference>
<dbReference type="PROSITE" id="PS50110">
    <property type="entry name" value="RESPONSE_REGULATORY"/>
    <property type="match status" value="1"/>
</dbReference>
<organism>
    <name type="scientific">Caulobacter vibrioides (strain NA1000 / CB15N)</name>
    <name type="common">Caulobacter crescentus</name>
    <dbReference type="NCBI Taxonomy" id="565050"/>
    <lineage>
        <taxon>Bacteria</taxon>
        <taxon>Pseudomonadati</taxon>
        <taxon>Pseudomonadota</taxon>
        <taxon>Alphaproteobacteria</taxon>
        <taxon>Caulobacterales</taxon>
        <taxon>Caulobacteraceae</taxon>
        <taxon>Caulobacter</taxon>
    </lineage>
</organism>
<feature type="chain" id="PRO_0000378311" description="Cell cycle transcriptional regulator CtrA">
    <location>
        <begin position="1"/>
        <end position="231"/>
    </location>
</feature>
<feature type="domain" description="Response regulatory" evidence="1">
    <location>
        <begin position="2"/>
        <end position="116"/>
    </location>
</feature>
<feature type="DNA-binding region" description="OmpR/PhoB-type" evidence="2">
    <location>
        <begin position="124"/>
        <end position="223"/>
    </location>
</feature>
<feature type="modified residue" description="4-aspartylphosphate" evidence="1">
    <location>
        <position position="51"/>
    </location>
</feature>
<feature type="mutagenesis site" description="Relies on ClpXP for degradation." evidence="4">
    <original>D</original>
    <variation>E</variation>
    <location>
        <position position="51"/>
    </location>
</feature>